<comment type="function">
    <text evidence="1">Component of the CENPA-CAD (nucleosome distal) complex, a complex recruited to centromeres which is involved in assembly of kinetochore proteins, mitotic progression and chromosome segregation. May be involved in incorporation of newly synthesized CENPA into centromeres via its interaction with the CENPA-NAC complex. Plays an important role in chromosome congression and in the recruitment of CENP-O complex (which comprises CENPO, CENPP, CENPQ and CENPU), CENPE and PLK1 to the kinetochores.</text>
</comment>
<comment type="subunit">
    <text evidence="1">Component of the CENPA-CAD complex, composed of CENPI, CENPK, CENPL, CENPO, CENPP, CENPQ, CENPR and CENPS. The CENPA-CAD complex interacts with the CENPA-NAC complex, at least composed of CENPA, CENPC, CENPH, CENPM, CENPN, CENPT and CENPU.</text>
</comment>
<comment type="subcellular location">
    <subcellularLocation>
        <location evidence="1">Nucleus</location>
    </subcellularLocation>
    <subcellularLocation>
        <location evidence="1">Chromosome</location>
        <location evidence="1">Centromere</location>
    </subcellularLocation>
    <text evidence="1">Localizes exclusively in the centromeres. The CENPA-CAD complex is probably recruited on centromeres by the CENPA-NAC complex.</text>
</comment>
<comment type="similarity">
    <text evidence="4">Belongs to the CENP-Q/OKP1 family.</text>
</comment>
<gene>
    <name type="primary">CENPQ</name>
    <name type="ORF">QtsA-15415</name>
</gene>
<evidence type="ECO:0000250" key="1">
    <source>
        <dbReference type="UniProtKB" id="Q7L2Z9"/>
    </source>
</evidence>
<evidence type="ECO:0000255" key="2"/>
<evidence type="ECO:0000256" key="3">
    <source>
        <dbReference type="SAM" id="MobiDB-lite"/>
    </source>
</evidence>
<evidence type="ECO:0000305" key="4"/>
<name>CENPQ_MACFA</name>
<protein>
    <recommendedName>
        <fullName>Centromere protein Q</fullName>
        <shortName>CENP-Q</shortName>
    </recommendedName>
</protein>
<accession>Q4R7G2</accession>
<proteinExistence type="evidence at transcript level"/>
<feature type="chain" id="PRO_0000249510" description="Centromere protein Q">
    <location>
        <begin position="1"/>
        <end position="268"/>
    </location>
</feature>
<feature type="region of interest" description="Disordered" evidence="3">
    <location>
        <begin position="1"/>
        <end position="31"/>
    </location>
</feature>
<feature type="coiled-coil region" evidence="2">
    <location>
        <begin position="170"/>
        <end position="203"/>
    </location>
</feature>
<feature type="modified residue" description="Phosphoserine" evidence="1">
    <location>
        <position position="31"/>
    </location>
</feature>
<feature type="modified residue" description="Phosphoserine" evidence="1">
    <location>
        <position position="249"/>
    </location>
</feature>
<organism>
    <name type="scientific">Macaca fascicularis</name>
    <name type="common">Crab-eating macaque</name>
    <name type="synonym">Cynomolgus monkey</name>
    <dbReference type="NCBI Taxonomy" id="9541"/>
    <lineage>
        <taxon>Eukaryota</taxon>
        <taxon>Metazoa</taxon>
        <taxon>Chordata</taxon>
        <taxon>Craniata</taxon>
        <taxon>Vertebrata</taxon>
        <taxon>Euteleostomi</taxon>
        <taxon>Mammalia</taxon>
        <taxon>Eutheria</taxon>
        <taxon>Euarchontoglires</taxon>
        <taxon>Primates</taxon>
        <taxon>Haplorrhini</taxon>
        <taxon>Catarrhini</taxon>
        <taxon>Cercopithecidae</taxon>
        <taxon>Cercopithecinae</taxon>
        <taxon>Macaca</taxon>
    </lineage>
</organism>
<dbReference type="EMBL" id="AB168856">
    <property type="protein sequence ID" value="BAE00960.1"/>
    <property type="molecule type" value="mRNA"/>
</dbReference>
<dbReference type="RefSeq" id="NP_001270378.1">
    <property type="nucleotide sequence ID" value="NM_001283449.1"/>
</dbReference>
<dbReference type="SMR" id="Q4R7G2"/>
<dbReference type="STRING" id="9541.ENSMFAP00000003214"/>
<dbReference type="eggNOG" id="ENOG502S34R">
    <property type="taxonomic scope" value="Eukaryota"/>
</dbReference>
<dbReference type="Proteomes" id="UP000233100">
    <property type="component" value="Unplaced"/>
</dbReference>
<dbReference type="GO" id="GO:0000775">
    <property type="term" value="C:chromosome, centromeric region"/>
    <property type="evidence" value="ECO:0007669"/>
    <property type="project" value="UniProtKB-SubCell"/>
</dbReference>
<dbReference type="GO" id="GO:0005634">
    <property type="term" value="C:nucleus"/>
    <property type="evidence" value="ECO:0007669"/>
    <property type="project" value="UniProtKB-SubCell"/>
</dbReference>
<dbReference type="GO" id="GO:0051310">
    <property type="term" value="P:metaphase chromosome alignment"/>
    <property type="evidence" value="ECO:0000250"/>
    <property type="project" value="UniProtKB"/>
</dbReference>
<dbReference type="GO" id="GO:1905342">
    <property type="term" value="P:positive regulation of protein localization to kinetochore"/>
    <property type="evidence" value="ECO:0000250"/>
    <property type="project" value="UniProtKB"/>
</dbReference>
<dbReference type="InterPro" id="IPR025212">
    <property type="entry name" value="CAD_CENP-Q"/>
</dbReference>
<dbReference type="PANTHER" id="PTHR31345">
    <property type="entry name" value="CENTROMERE PROTEIN Q"/>
    <property type="match status" value="1"/>
</dbReference>
<dbReference type="PANTHER" id="PTHR31345:SF3">
    <property type="entry name" value="CENTROMERE PROTEIN Q"/>
    <property type="match status" value="1"/>
</dbReference>
<dbReference type="Pfam" id="PF13094">
    <property type="entry name" value="CENP-Q"/>
    <property type="match status" value="1"/>
</dbReference>
<sequence>MSGKANASKKNFEQLKRNPKRKKDNEEVVLSEKKVRNTVKRNKNHLKDLFSEGQTKHTNLKQIKIAPNKRKTWQPLSKSTRDYLQTMMESVLRTILSDRIKDKEEIQYHLNFLKNRLLQLCETLKVPPKKMEDLTNVSRLLNMERARGKANEEGLALLQEEIDKMVETTELMTGNIQSLKNKIQILASEVEEEEERVKQIHQINTSGVLSLPELSQKTLKAPTLQKEILALIPNQNALLKDLDILHNSSHMKSMSTFIEEAYKKLNAS</sequence>
<reference key="1">
    <citation type="submission" date="2005-06" db="EMBL/GenBank/DDBJ databases">
        <title>DNA sequences of macaque genes expressed in brain or testis and its evolutionary implications.</title>
        <authorList>
            <consortium name="International consortium for macaque cDNA sequencing and analysis"/>
        </authorList>
    </citation>
    <scope>NUCLEOTIDE SEQUENCE [LARGE SCALE MRNA]</scope>
    <source>
        <tissue>Testis</tissue>
    </source>
</reference>
<keyword id="KW-0137">Centromere</keyword>
<keyword id="KW-0158">Chromosome</keyword>
<keyword id="KW-0175">Coiled coil</keyword>
<keyword id="KW-0539">Nucleus</keyword>
<keyword id="KW-0597">Phosphoprotein</keyword>
<keyword id="KW-1185">Reference proteome</keyword>